<reference key="1">
    <citation type="journal article" date="2008" name="Genome Res.">
        <title>Comparative genome analysis of Salmonella enteritidis PT4 and Salmonella gallinarum 287/91 provides insights into evolutionary and host adaptation pathways.</title>
        <authorList>
            <person name="Thomson N.R."/>
            <person name="Clayton D.J."/>
            <person name="Windhorst D."/>
            <person name="Vernikos G."/>
            <person name="Davidson S."/>
            <person name="Churcher C."/>
            <person name="Quail M.A."/>
            <person name="Stevens M."/>
            <person name="Jones M.A."/>
            <person name="Watson M."/>
            <person name="Barron A."/>
            <person name="Layton A."/>
            <person name="Pickard D."/>
            <person name="Kingsley R.A."/>
            <person name="Bignell A."/>
            <person name="Clark L."/>
            <person name="Harris B."/>
            <person name="Ormond D."/>
            <person name="Abdellah Z."/>
            <person name="Brooks K."/>
            <person name="Cherevach I."/>
            <person name="Chillingworth T."/>
            <person name="Woodward J."/>
            <person name="Norberczak H."/>
            <person name="Lord A."/>
            <person name="Arrowsmith C."/>
            <person name="Jagels K."/>
            <person name="Moule S."/>
            <person name="Mungall K."/>
            <person name="Saunders M."/>
            <person name="Whitehead S."/>
            <person name="Chabalgoity J.A."/>
            <person name="Maskell D."/>
            <person name="Humphreys T."/>
            <person name="Roberts M."/>
            <person name="Barrow P.A."/>
            <person name="Dougan G."/>
            <person name="Parkhill J."/>
        </authorList>
    </citation>
    <scope>NUCLEOTIDE SEQUENCE [LARGE SCALE GENOMIC DNA]</scope>
    <source>
        <strain>P125109</strain>
    </source>
</reference>
<protein>
    <recommendedName>
        <fullName evidence="1">Gamma-glutamyl phosphate reductase</fullName>
        <shortName evidence="1">GPR</shortName>
        <ecNumber evidence="1">1.2.1.41</ecNumber>
    </recommendedName>
    <alternativeName>
        <fullName evidence="1">Glutamate-5-semialdehyde dehydrogenase</fullName>
    </alternativeName>
    <alternativeName>
        <fullName evidence="1">Glutamyl-gamma-semialdehyde dehydrogenase</fullName>
        <shortName evidence="1">GSA dehydrogenase</shortName>
    </alternativeName>
</protein>
<gene>
    <name evidence="1" type="primary">proA</name>
    <name type="ordered locus">SEN0305</name>
</gene>
<feature type="chain" id="PRO_1000193646" description="Gamma-glutamyl phosphate reductase">
    <location>
        <begin position="1"/>
        <end position="415"/>
    </location>
</feature>
<accession>B5R4S6</accession>
<organism>
    <name type="scientific">Salmonella enteritidis PT4 (strain P125109)</name>
    <dbReference type="NCBI Taxonomy" id="550537"/>
    <lineage>
        <taxon>Bacteria</taxon>
        <taxon>Pseudomonadati</taxon>
        <taxon>Pseudomonadota</taxon>
        <taxon>Gammaproteobacteria</taxon>
        <taxon>Enterobacterales</taxon>
        <taxon>Enterobacteriaceae</taxon>
        <taxon>Salmonella</taxon>
    </lineage>
</organism>
<comment type="function">
    <text evidence="1">Catalyzes the NADPH-dependent reduction of L-glutamate 5-phosphate into L-glutamate 5-semialdehyde and phosphate. The product spontaneously undergoes cyclization to form 1-pyrroline-5-carboxylate.</text>
</comment>
<comment type="catalytic activity">
    <reaction evidence="1">
        <text>L-glutamate 5-semialdehyde + phosphate + NADP(+) = L-glutamyl 5-phosphate + NADPH + H(+)</text>
        <dbReference type="Rhea" id="RHEA:19541"/>
        <dbReference type="ChEBI" id="CHEBI:15378"/>
        <dbReference type="ChEBI" id="CHEBI:43474"/>
        <dbReference type="ChEBI" id="CHEBI:57783"/>
        <dbReference type="ChEBI" id="CHEBI:58066"/>
        <dbReference type="ChEBI" id="CHEBI:58274"/>
        <dbReference type="ChEBI" id="CHEBI:58349"/>
        <dbReference type="EC" id="1.2.1.41"/>
    </reaction>
</comment>
<comment type="pathway">
    <text evidence="1">Amino-acid biosynthesis; L-proline biosynthesis; L-glutamate 5-semialdehyde from L-glutamate: step 2/2.</text>
</comment>
<comment type="subcellular location">
    <subcellularLocation>
        <location evidence="1">Cytoplasm</location>
    </subcellularLocation>
</comment>
<comment type="similarity">
    <text evidence="1">Belongs to the gamma-glutamyl phosphate reductase family.</text>
</comment>
<name>PROA_SALEP</name>
<evidence type="ECO:0000255" key="1">
    <source>
        <dbReference type="HAMAP-Rule" id="MF_00412"/>
    </source>
</evidence>
<sequence>MLEQMGIAAKAASYKLALLSSGEKNRVLEKIADELEAQMESILSANVQDVEQARANGLSEAMLDRLTLTPARLKAIADDVRQVCNLADPVGQVIDGGLLDSGLRMERRRVPLGVVGVIYEARPNVTVDVASLCLKTGNAVILRGGKETYRTNAATVRVIQKALKACGLPEAAVQAIDNPDRSLVNEMLRMDKYIDMLIPRGGAGLHKLCREQSTIPVITGGIGVCHIFVDSSADIAPALKIIVNAKTQRPSTCNTVETLLVHQDIAERFLPALSKQMAESGVTLHGDETVMQLHGPAKLVPLKPEKLDNEFLSLDLNVVVVENMDGAIAHIREHGTQHSDAILTSDMHNAARFVNEVDSAAVYVNASTRFTDGGQFGLGAEVAVSTQKLHARGPMGLEALTTYKWIGFGDGTIRA</sequence>
<proteinExistence type="inferred from homology"/>
<dbReference type="EC" id="1.2.1.41" evidence="1"/>
<dbReference type="EMBL" id="AM933172">
    <property type="protein sequence ID" value="CAR31892.1"/>
    <property type="molecule type" value="Genomic_DNA"/>
</dbReference>
<dbReference type="RefSeq" id="WP_000893239.1">
    <property type="nucleotide sequence ID" value="NC_011294.1"/>
</dbReference>
<dbReference type="SMR" id="B5R4S6"/>
<dbReference type="KEGG" id="set:SEN0305"/>
<dbReference type="HOGENOM" id="CLU_030231_0_0_6"/>
<dbReference type="UniPathway" id="UPA00098">
    <property type="reaction ID" value="UER00360"/>
</dbReference>
<dbReference type="Proteomes" id="UP000000613">
    <property type="component" value="Chromosome"/>
</dbReference>
<dbReference type="GO" id="GO:0005737">
    <property type="term" value="C:cytoplasm"/>
    <property type="evidence" value="ECO:0007669"/>
    <property type="project" value="UniProtKB-SubCell"/>
</dbReference>
<dbReference type="GO" id="GO:0004350">
    <property type="term" value="F:glutamate-5-semialdehyde dehydrogenase activity"/>
    <property type="evidence" value="ECO:0007669"/>
    <property type="project" value="UniProtKB-UniRule"/>
</dbReference>
<dbReference type="GO" id="GO:0050661">
    <property type="term" value="F:NADP binding"/>
    <property type="evidence" value="ECO:0007669"/>
    <property type="project" value="InterPro"/>
</dbReference>
<dbReference type="GO" id="GO:0055129">
    <property type="term" value="P:L-proline biosynthetic process"/>
    <property type="evidence" value="ECO:0007669"/>
    <property type="project" value="UniProtKB-UniRule"/>
</dbReference>
<dbReference type="CDD" id="cd07079">
    <property type="entry name" value="ALDH_F18-19_ProA-GPR"/>
    <property type="match status" value="1"/>
</dbReference>
<dbReference type="FunFam" id="3.40.309.10:FF:000006">
    <property type="entry name" value="Gamma-glutamyl phosphate reductase"/>
    <property type="match status" value="1"/>
</dbReference>
<dbReference type="Gene3D" id="3.40.605.10">
    <property type="entry name" value="Aldehyde Dehydrogenase, Chain A, domain 1"/>
    <property type="match status" value="1"/>
</dbReference>
<dbReference type="Gene3D" id="3.40.309.10">
    <property type="entry name" value="Aldehyde Dehydrogenase, Chain A, domain 2"/>
    <property type="match status" value="1"/>
</dbReference>
<dbReference type="HAMAP" id="MF_00412">
    <property type="entry name" value="ProA"/>
    <property type="match status" value="1"/>
</dbReference>
<dbReference type="InterPro" id="IPR016161">
    <property type="entry name" value="Ald_DH/histidinol_DH"/>
</dbReference>
<dbReference type="InterPro" id="IPR016163">
    <property type="entry name" value="Ald_DH_C"/>
</dbReference>
<dbReference type="InterPro" id="IPR016162">
    <property type="entry name" value="Ald_DH_N"/>
</dbReference>
<dbReference type="InterPro" id="IPR015590">
    <property type="entry name" value="Aldehyde_DH_dom"/>
</dbReference>
<dbReference type="InterPro" id="IPR020593">
    <property type="entry name" value="G-glutamylP_reductase_CS"/>
</dbReference>
<dbReference type="InterPro" id="IPR012134">
    <property type="entry name" value="Glu-5-SA_DH"/>
</dbReference>
<dbReference type="InterPro" id="IPR000965">
    <property type="entry name" value="GPR_dom"/>
</dbReference>
<dbReference type="NCBIfam" id="NF001221">
    <property type="entry name" value="PRK00197.1"/>
    <property type="match status" value="1"/>
</dbReference>
<dbReference type="NCBIfam" id="TIGR00407">
    <property type="entry name" value="proA"/>
    <property type="match status" value="1"/>
</dbReference>
<dbReference type="PANTHER" id="PTHR11063:SF8">
    <property type="entry name" value="DELTA-1-PYRROLINE-5-CARBOXYLATE SYNTHASE"/>
    <property type="match status" value="1"/>
</dbReference>
<dbReference type="PANTHER" id="PTHR11063">
    <property type="entry name" value="GLUTAMATE SEMIALDEHYDE DEHYDROGENASE"/>
    <property type="match status" value="1"/>
</dbReference>
<dbReference type="Pfam" id="PF00171">
    <property type="entry name" value="Aldedh"/>
    <property type="match status" value="1"/>
</dbReference>
<dbReference type="PIRSF" id="PIRSF000151">
    <property type="entry name" value="GPR"/>
    <property type="match status" value="1"/>
</dbReference>
<dbReference type="SUPFAM" id="SSF53720">
    <property type="entry name" value="ALDH-like"/>
    <property type="match status" value="1"/>
</dbReference>
<dbReference type="PROSITE" id="PS01223">
    <property type="entry name" value="PROA"/>
    <property type="match status" value="1"/>
</dbReference>
<keyword id="KW-0028">Amino-acid biosynthesis</keyword>
<keyword id="KW-0963">Cytoplasm</keyword>
<keyword id="KW-0521">NADP</keyword>
<keyword id="KW-0560">Oxidoreductase</keyword>
<keyword id="KW-0641">Proline biosynthesis</keyword>